<organism>
    <name type="scientific">Mycobacterium tuberculosis (strain ATCC 25618 / H37Rv)</name>
    <dbReference type="NCBI Taxonomy" id="83332"/>
    <lineage>
        <taxon>Bacteria</taxon>
        <taxon>Bacillati</taxon>
        <taxon>Actinomycetota</taxon>
        <taxon>Actinomycetes</taxon>
        <taxon>Mycobacteriales</taxon>
        <taxon>Mycobacteriaceae</taxon>
        <taxon>Mycobacterium</taxon>
        <taxon>Mycobacterium tuberculosis complex</taxon>
    </lineage>
</organism>
<name>ACCD6_MYCTU</name>
<comment type="function">
    <text evidence="3">Component of a biotin-dependent acyl-CoA carboxylase complex. This subunit transfers the CO2 from carboxybiotin to the CoA ester substrate (PubMed:17114269). When associated with the alpha3 subunit AccA3, is involved in the carboxylation of acetyl-CoA and propionyl-CoA, with a preference for acetyl-CoA (PubMed:17114269).</text>
</comment>
<comment type="catalytic activity">
    <reaction evidence="3 5">
        <text>N(6)-carboxybiotinyl-L-lysyl-[protein] + acetyl-CoA = N(6)-biotinyl-L-lysyl-[protein] + malonyl-CoA</text>
        <dbReference type="Rhea" id="RHEA:54728"/>
        <dbReference type="Rhea" id="RHEA-COMP:10505"/>
        <dbReference type="Rhea" id="RHEA-COMP:10506"/>
        <dbReference type="ChEBI" id="CHEBI:57288"/>
        <dbReference type="ChEBI" id="CHEBI:57384"/>
        <dbReference type="ChEBI" id="CHEBI:83144"/>
        <dbReference type="ChEBI" id="CHEBI:83145"/>
        <dbReference type="EC" id="2.1.3.15"/>
    </reaction>
    <physiologicalReaction direction="left-to-right" evidence="3">
        <dbReference type="Rhea" id="RHEA:54729"/>
    </physiologicalReaction>
</comment>
<comment type="catalytic activity">
    <reaction evidence="3">
        <text>N(6)-carboxybiotinyl-L-lysyl-[protein] + propanoyl-CoA = methylmalonyl-CoA + N(6)-biotinyl-L-lysyl-[protein]</text>
        <dbReference type="Rhea" id="RHEA:66612"/>
        <dbReference type="Rhea" id="RHEA-COMP:10505"/>
        <dbReference type="Rhea" id="RHEA-COMP:10506"/>
        <dbReference type="ChEBI" id="CHEBI:57392"/>
        <dbReference type="ChEBI" id="CHEBI:59916"/>
        <dbReference type="ChEBI" id="CHEBI:83144"/>
        <dbReference type="ChEBI" id="CHEBI:83145"/>
    </reaction>
    <physiologicalReaction direction="left-to-right" evidence="3">
        <dbReference type="Rhea" id="RHEA:66613"/>
    </physiologicalReaction>
</comment>
<comment type="activity regulation">
    <text evidence="3 5">Activity of the AccA3/AccD6 complex is inhibited by interaction with the epsilon subunit AccE5 (PubMed:17114269). Inhibited by dimethyl itaconate, C75, the herbicide haloxyfop, cerulenin, and 1,2-cyclohexanedione (PubMed:17114269, PubMed:25092705).</text>
</comment>
<comment type="biophysicochemical properties">
    <kinetics>
        <KM evidence="3">4.9 mM for acetyl-CoA (in the presence of alpha3 subunit)</KM>
        <KM evidence="3">0.97 mM for propionyl-CoA (in the presence of alpha3 subunit)</KM>
        <KM evidence="5">0.39 mM for malonyl-CoA</KM>
        <Vmax evidence="3">1.1 nmol/min/mg enzyme with acetyl-CoA as substrate (in the presence of alpha3 subunit)</Vmax>
        <Vmax evidence="3">0.36 nmol/min/mg enzyme with propionyl-CoA as substrate (in the presence of alpha3 subunit)</Vmax>
    </kinetics>
</comment>
<comment type="pathway">
    <text evidence="8">Lipid metabolism; fatty acid biosynthesis.</text>
</comment>
<comment type="pathway">
    <text evidence="4 8">Lipid metabolism; mycolic acid biosynthesis.</text>
</comment>
<comment type="subunit">
    <text evidence="3 5">Homodimer (PubMed:25092705). The biotin-dependent acyl-CoA carboxylase complex is composed of AccA3, which contains the biotin carboxylase (BC) and biotin carboxyl carrier protein (BCCP) domains, and AccD6, which contains the carboxyl transferase (CT) domain (PubMed:17114269). The AccA3/AccD6 complex forms a dodecamer (PubMed:17114269).</text>
</comment>
<comment type="induction">
    <text evidence="3">Expressed at higher levels during the exponential growth phase.</text>
</comment>
<comment type="disruption phenotype">
    <text evidence="4">Essential. Cannot be deleted. Limited expression level affects growth, mycolic acid content and cell morphology.</text>
</comment>
<comment type="miscellaneous">
    <text evidence="4">AccD6 is dispensable in nonpathogenic strains.</text>
</comment>
<comment type="similarity">
    <text evidence="7">Belongs to the AccD/PCCB family.</text>
</comment>
<gene>
    <name evidence="6" type="primary">accD6</name>
    <name type="ordered locus">Rv2247</name>
    <name type="ORF">MTCY427.28</name>
</gene>
<sequence>MTIMAPEAVGESLDPRDPLLRLSNFFDDGSVELLHERDRSGVLAAAGTVNGVRTIAFCTDGTVMGGAMGVEGCTHIVNAYDTAIEDQSPIVGIWHSGGARLAEGVRALHAVGQVFEAMIRASGYIPQISVVVGFAAGGAAYGPALTDVVVMAPESRVFVTGPDVVRSVTGEDVDMASLGGPETHHKKSGVCHIVADDELDAYDRGRRLVGLFCQQGHFDRSKAEAGDTDIHALLPESSRRAYDVRPIVTAILDADTPFDEFQANWAPSMVVGLGRLSGRTVGVLANNPLRLGGCLNSESAEKAARFVRLCDAFGIPLVVVVDVPGYLPGVDQEWGGVVRRGAKLLHAFGECTVPRVTLVTRKTYGGAYIAMNSRSLNATKVFAWPDAEVAVMGAKAAVGILHKKKLAAAPEHEREALHDQLAAEHERIAGGVDSALDIGVVDEKIDPAHTRSKLTEALAQAPARRGRHKNIPL</sequence>
<accession>P9WQH5</accession>
<accession>L0TBQ7</accession>
<accession>P63407</accession>
<accession>Q10506</accession>
<evidence type="ECO:0000255" key="1">
    <source>
        <dbReference type="PROSITE-ProRule" id="PRU01136"/>
    </source>
</evidence>
<evidence type="ECO:0000255" key="2">
    <source>
        <dbReference type="PROSITE-ProRule" id="PRU01137"/>
    </source>
</evidence>
<evidence type="ECO:0000269" key="3">
    <source>
    </source>
</evidence>
<evidence type="ECO:0000269" key="4">
    <source>
    </source>
</evidence>
<evidence type="ECO:0000269" key="5">
    <source>
    </source>
</evidence>
<evidence type="ECO:0000303" key="6">
    <source>
    </source>
</evidence>
<evidence type="ECO:0000305" key="7"/>
<evidence type="ECO:0000305" key="8">
    <source>
    </source>
</evidence>
<evidence type="ECO:0007744" key="9">
    <source>
        <dbReference type="PDB" id="4FB8"/>
    </source>
</evidence>
<evidence type="ECO:0007744" key="10">
    <source>
        <dbReference type="PDB" id="4G2R"/>
    </source>
</evidence>
<evidence type="ECO:0007744" key="11">
    <source>
        <dbReference type="PDB" id="4L6W"/>
    </source>
</evidence>
<evidence type="ECO:0007744" key="12">
    <source>
        <dbReference type="PDB" id="6P7U"/>
    </source>
</evidence>
<evidence type="ECO:0007744" key="13">
    <source>
        <dbReference type="PDB" id="6PK2"/>
    </source>
</evidence>
<evidence type="ECO:0007744" key="14">
    <source>
        <dbReference type="PDB" id="6PRW"/>
    </source>
</evidence>
<evidence type="ECO:0007744" key="15">
    <source>
        <dbReference type="PDB" id="6TZV"/>
    </source>
</evidence>
<evidence type="ECO:0007744" key="16">
    <source>
    </source>
</evidence>
<evidence type="ECO:0007829" key="17">
    <source>
        <dbReference type="PDB" id="4G2R"/>
    </source>
</evidence>
<evidence type="ECO:0007829" key="18">
    <source>
        <dbReference type="PDB" id="4L6W"/>
    </source>
</evidence>
<evidence type="ECO:0007829" key="19">
    <source>
        <dbReference type="PDB" id="6P7U"/>
    </source>
</evidence>
<feature type="initiator methionine" description="Removed" evidence="16">
    <location>
        <position position="1"/>
    </location>
</feature>
<feature type="chain" id="PRO_0000199800" description="Biotin-dependent acetyl-/propionyl-coenzyme A carboxylase beta6 subunit">
    <location>
        <begin position="2"/>
        <end position="473"/>
    </location>
</feature>
<feature type="domain" description="CoA carboxyltransferase N-terminal" evidence="1">
    <location>
        <begin position="2"/>
        <end position="224"/>
    </location>
</feature>
<feature type="domain" description="CoA carboxyltransferase C-terminal" evidence="2">
    <location>
        <begin position="225"/>
        <end position="473"/>
    </location>
</feature>
<feature type="binding site" evidence="10">
    <location>
        <position position="99"/>
    </location>
    <ligand>
        <name>(R)-haloxyfop</name>
        <dbReference type="ChEBI" id="CHEBI:136690"/>
        <note>inhibitor</note>
    </ligand>
</feature>
<feature type="binding site" evidence="10">
    <location>
        <position position="138"/>
    </location>
    <ligand>
        <name>(R)-haloxyfop</name>
        <dbReference type="ChEBI" id="CHEBI:136690"/>
        <note>inhibitor</note>
    </ligand>
</feature>
<feature type="binding site" evidence="10">
    <location>
        <position position="185"/>
    </location>
    <ligand>
        <name>(R)-haloxyfop</name>
        <dbReference type="ChEBI" id="CHEBI:136690"/>
        <note>inhibitor</note>
    </ligand>
</feature>
<feature type="binding site" evidence="10">
    <location>
        <position position="334"/>
    </location>
    <ligand>
        <name>(R)-haloxyfop</name>
        <dbReference type="ChEBI" id="CHEBI:136690"/>
        <note>inhibitor</note>
    </ligand>
</feature>
<feature type="modified residue" description="N-acetylthreonine" evidence="16">
    <location>
        <position position="2"/>
    </location>
</feature>
<feature type="helix" evidence="19">
    <location>
        <begin position="14"/>
        <end position="16"/>
    </location>
</feature>
<feature type="helix" evidence="18">
    <location>
        <begin position="18"/>
        <end position="25"/>
    </location>
</feature>
<feature type="strand" evidence="18">
    <location>
        <begin position="32"/>
        <end position="35"/>
    </location>
</feature>
<feature type="strand" evidence="18">
    <location>
        <begin position="39"/>
        <end position="49"/>
    </location>
</feature>
<feature type="strand" evidence="18">
    <location>
        <begin position="52"/>
        <end position="59"/>
    </location>
</feature>
<feature type="turn" evidence="18">
    <location>
        <begin position="61"/>
        <end position="63"/>
    </location>
</feature>
<feature type="helix" evidence="18">
    <location>
        <begin position="64"/>
        <end position="66"/>
    </location>
</feature>
<feature type="helix" evidence="18">
    <location>
        <begin position="70"/>
        <end position="86"/>
    </location>
</feature>
<feature type="strand" evidence="18">
    <location>
        <begin position="90"/>
        <end position="96"/>
    </location>
</feature>
<feature type="helix" evidence="18">
    <location>
        <begin position="101"/>
        <end position="103"/>
    </location>
</feature>
<feature type="helix" evidence="18">
    <location>
        <begin position="104"/>
        <end position="121"/>
    </location>
</feature>
<feature type="turn" evidence="18">
    <location>
        <begin position="122"/>
        <end position="124"/>
    </location>
</feature>
<feature type="strand" evidence="18">
    <location>
        <begin position="127"/>
        <end position="136"/>
    </location>
</feature>
<feature type="helix" evidence="18">
    <location>
        <begin position="137"/>
        <end position="140"/>
    </location>
</feature>
<feature type="helix" evidence="18">
    <location>
        <begin position="141"/>
        <end position="145"/>
    </location>
</feature>
<feature type="strand" evidence="18">
    <location>
        <begin position="146"/>
        <end position="151"/>
    </location>
</feature>
<feature type="strand" evidence="18">
    <location>
        <begin position="156"/>
        <end position="160"/>
    </location>
</feature>
<feature type="helix" evidence="18">
    <location>
        <begin position="162"/>
        <end position="169"/>
    </location>
</feature>
<feature type="helix" evidence="18">
    <location>
        <begin position="175"/>
        <end position="179"/>
    </location>
</feature>
<feature type="helix" evidence="18">
    <location>
        <begin position="181"/>
        <end position="186"/>
    </location>
</feature>
<feature type="strand" evidence="17">
    <location>
        <begin position="188"/>
        <end position="190"/>
    </location>
</feature>
<feature type="strand" evidence="18">
    <location>
        <begin position="192"/>
        <end position="194"/>
    </location>
</feature>
<feature type="helix" evidence="18">
    <location>
        <begin position="198"/>
        <end position="213"/>
    </location>
</feature>
<feature type="helix" evidence="18">
    <location>
        <begin position="220"/>
        <end position="225"/>
    </location>
</feature>
<feature type="helix" evidence="18">
    <location>
        <begin position="230"/>
        <end position="233"/>
    </location>
</feature>
<feature type="strand" evidence="18">
    <location>
        <begin position="236"/>
        <end position="240"/>
    </location>
</feature>
<feature type="helix" evidence="18">
    <location>
        <begin position="245"/>
        <end position="251"/>
    </location>
</feature>
<feature type="strand" evidence="18">
    <location>
        <begin position="259"/>
        <end position="262"/>
    </location>
</feature>
<feature type="strand" evidence="18">
    <location>
        <begin position="269"/>
        <end position="276"/>
    </location>
</feature>
<feature type="strand" evidence="18">
    <location>
        <begin position="279"/>
        <end position="286"/>
    </location>
</feature>
<feature type="turn" evidence="18">
    <location>
        <begin position="288"/>
        <end position="290"/>
    </location>
</feature>
<feature type="helix" evidence="18">
    <location>
        <begin position="291"/>
        <end position="293"/>
    </location>
</feature>
<feature type="helix" evidence="18">
    <location>
        <begin position="297"/>
        <end position="313"/>
    </location>
</feature>
<feature type="strand" evidence="18">
    <location>
        <begin position="317"/>
        <end position="323"/>
    </location>
</feature>
<feature type="helix" evidence="18">
    <location>
        <begin position="330"/>
        <end position="333"/>
    </location>
</feature>
<feature type="helix" evidence="18">
    <location>
        <begin position="335"/>
        <end position="350"/>
    </location>
</feature>
<feature type="strand" evidence="18">
    <location>
        <begin position="355"/>
        <end position="364"/>
    </location>
</feature>
<feature type="helix" evidence="18">
    <location>
        <begin position="365"/>
        <end position="370"/>
    </location>
</feature>
<feature type="helix" evidence="18">
    <location>
        <begin position="374"/>
        <end position="376"/>
    </location>
</feature>
<feature type="strand" evidence="18">
    <location>
        <begin position="379"/>
        <end position="383"/>
    </location>
</feature>
<feature type="strand" evidence="18">
    <location>
        <begin position="388"/>
        <end position="392"/>
    </location>
</feature>
<feature type="helix" evidence="18">
    <location>
        <begin position="394"/>
        <end position="398"/>
    </location>
</feature>
<feature type="helix" evidence="18">
    <location>
        <begin position="403"/>
        <end position="408"/>
    </location>
</feature>
<feature type="helix" evidence="18">
    <location>
        <begin position="411"/>
        <end position="428"/>
    </location>
</feature>
<feature type="strand" evidence="19">
    <location>
        <begin position="429"/>
        <end position="431"/>
    </location>
</feature>
<feature type="helix" evidence="18">
    <location>
        <begin position="432"/>
        <end position="437"/>
    </location>
</feature>
<feature type="helix" evidence="18">
    <location>
        <begin position="447"/>
        <end position="449"/>
    </location>
</feature>
<feature type="helix" evidence="18">
    <location>
        <begin position="450"/>
        <end position="460"/>
    </location>
</feature>
<keyword id="KW-0002">3D-structure</keyword>
<keyword id="KW-0007">Acetylation</keyword>
<keyword id="KW-0275">Fatty acid biosynthesis</keyword>
<keyword id="KW-0276">Fatty acid metabolism</keyword>
<keyword id="KW-0444">Lipid biosynthesis</keyword>
<keyword id="KW-0443">Lipid metabolism</keyword>
<keyword id="KW-1185">Reference proteome</keyword>
<keyword id="KW-0808">Transferase</keyword>
<dbReference type="EC" id="2.1.3.15" evidence="3"/>
<dbReference type="EC" id="2.1.3.-" evidence="3"/>
<dbReference type="EMBL" id="AL123456">
    <property type="protein sequence ID" value="CCP45027.1"/>
    <property type="molecule type" value="Genomic_DNA"/>
</dbReference>
<dbReference type="PIR" id="C70779">
    <property type="entry name" value="C70779"/>
</dbReference>
<dbReference type="RefSeq" id="NP_216763.1">
    <property type="nucleotide sequence ID" value="NC_000962.3"/>
</dbReference>
<dbReference type="RefSeq" id="WP_003900487.1">
    <property type="nucleotide sequence ID" value="NZ_NVQJ01000008.1"/>
</dbReference>
<dbReference type="PDB" id="4FB8">
    <property type="method" value="X-ray"/>
    <property type="resolution" value="3.00 A"/>
    <property type="chains" value="A/B=1-473"/>
</dbReference>
<dbReference type="PDB" id="4G2R">
    <property type="method" value="X-ray"/>
    <property type="resolution" value="2.28 A"/>
    <property type="chains" value="A/B=1-473"/>
</dbReference>
<dbReference type="PDB" id="4L6W">
    <property type="method" value="X-ray"/>
    <property type="resolution" value="1.95 A"/>
    <property type="chains" value="A/B=1-473"/>
</dbReference>
<dbReference type="PDB" id="6P7U">
    <property type="method" value="X-ray"/>
    <property type="resolution" value="2.20 A"/>
    <property type="chains" value="A/B/C/D=1-473"/>
</dbReference>
<dbReference type="PDB" id="6PK2">
    <property type="method" value="X-ray"/>
    <property type="resolution" value="2.40 A"/>
    <property type="chains" value="A/B/C/D/E/F/G/H=1-473"/>
</dbReference>
<dbReference type="PDB" id="6PRW">
    <property type="method" value="X-ray"/>
    <property type="resolution" value="2.61 A"/>
    <property type="chains" value="A/B/C/D/E/F/G/H=1-473"/>
</dbReference>
<dbReference type="PDB" id="6TZV">
    <property type="method" value="X-ray"/>
    <property type="resolution" value="2.39 A"/>
    <property type="chains" value="A/B/C/D/E/F/G/H=1-473"/>
</dbReference>
<dbReference type="PDBsum" id="4FB8"/>
<dbReference type="PDBsum" id="4G2R"/>
<dbReference type="PDBsum" id="4L6W"/>
<dbReference type="PDBsum" id="6P7U"/>
<dbReference type="PDBsum" id="6PK2"/>
<dbReference type="PDBsum" id="6PRW"/>
<dbReference type="PDBsum" id="6TZV"/>
<dbReference type="SMR" id="P9WQH5"/>
<dbReference type="FunCoup" id="P9WQH5">
    <property type="interactions" value="168"/>
</dbReference>
<dbReference type="STRING" id="83332.Rv2247"/>
<dbReference type="iPTMnet" id="P9WQH5"/>
<dbReference type="PaxDb" id="83332-Rv2247"/>
<dbReference type="DNASU" id="887671"/>
<dbReference type="GeneID" id="887671"/>
<dbReference type="KEGG" id="mtu:Rv2247"/>
<dbReference type="KEGG" id="mtv:RVBD_2247"/>
<dbReference type="TubercuList" id="Rv2247"/>
<dbReference type="eggNOG" id="COG4799">
    <property type="taxonomic scope" value="Bacteria"/>
</dbReference>
<dbReference type="InParanoid" id="P9WQH5"/>
<dbReference type="OrthoDB" id="4434131at2"/>
<dbReference type="PhylomeDB" id="P9WQH5"/>
<dbReference type="BioCyc" id="MetaCyc:G185E-6463-MONOMER"/>
<dbReference type="UniPathway" id="UPA00094"/>
<dbReference type="UniPathway" id="UPA00915"/>
<dbReference type="EvolutionaryTrace" id="P9WQH5"/>
<dbReference type="Proteomes" id="UP000001584">
    <property type="component" value="Chromosome"/>
</dbReference>
<dbReference type="GO" id="GO:0009317">
    <property type="term" value="C:acetyl-CoA carboxylase complex"/>
    <property type="evidence" value="ECO:0000314"/>
    <property type="project" value="MTBBASE"/>
</dbReference>
<dbReference type="GO" id="GO:0009274">
    <property type="term" value="C:peptidoglycan-based cell wall"/>
    <property type="evidence" value="ECO:0007005"/>
    <property type="project" value="MTBBASE"/>
</dbReference>
<dbReference type="GO" id="GO:0003989">
    <property type="term" value="F:acetyl-CoA carboxylase activity"/>
    <property type="evidence" value="ECO:0000314"/>
    <property type="project" value="MTBBASE"/>
</dbReference>
<dbReference type="GO" id="GO:0004658">
    <property type="term" value="F:propionyl-CoA carboxylase activity"/>
    <property type="evidence" value="ECO:0000318"/>
    <property type="project" value="GO_Central"/>
</dbReference>
<dbReference type="GO" id="GO:0016740">
    <property type="term" value="F:transferase activity"/>
    <property type="evidence" value="ECO:0007669"/>
    <property type="project" value="UniProtKB-KW"/>
</dbReference>
<dbReference type="GO" id="GO:0019367">
    <property type="term" value="P:fatty acid elongation, saturated fatty acid"/>
    <property type="evidence" value="ECO:0000314"/>
    <property type="project" value="MTBBASE"/>
</dbReference>
<dbReference type="FunFam" id="3.90.226.10:FF:000039">
    <property type="entry name" value="Propionyl-CoA carboxylase subunit beta 6"/>
    <property type="match status" value="1"/>
</dbReference>
<dbReference type="FunFam" id="3.90.226.10:FF:000060">
    <property type="entry name" value="Propionyl-CoA carboxylase subunit beta 6"/>
    <property type="match status" value="1"/>
</dbReference>
<dbReference type="Gene3D" id="3.90.226.10">
    <property type="entry name" value="2-enoyl-CoA Hydratase, Chain A, domain 1"/>
    <property type="match status" value="2"/>
</dbReference>
<dbReference type="InterPro" id="IPR051047">
    <property type="entry name" value="AccD/PCCB"/>
</dbReference>
<dbReference type="InterPro" id="IPR034733">
    <property type="entry name" value="AcCoA_carboxyl_beta"/>
</dbReference>
<dbReference type="InterPro" id="IPR029045">
    <property type="entry name" value="ClpP/crotonase-like_dom_sf"/>
</dbReference>
<dbReference type="InterPro" id="IPR011763">
    <property type="entry name" value="COA_CT_C"/>
</dbReference>
<dbReference type="InterPro" id="IPR011762">
    <property type="entry name" value="COA_CT_N"/>
</dbReference>
<dbReference type="PANTHER" id="PTHR43842">
    <property type="entry name" value="PROPIONYL-COA CARBOXYLASE BETA CHAIN"/>
    <property type="match status" value="1"/>
</dbReference>
<dbReference type="PANTHER" id="PTHR43842:SF2">
    <property type="entry name" value="PROPIONYL-COA CARBOXYLASE BETA CHAIN, MITOCHONDRIAL"/>
    <property type="match status" value="1"/>
</dbReference>
<dbReference type="Pfam" id="PF01039">
    <property type="entry name" value="Carboxyl_trans"/>
    <property type="match status" value="1"/>
</dbReference>
<dbReference type="SUPFAM" id="SSF52096">
    <property type="entry name" value="ClpP/crotonase"/>
    <property type="match status" value="2"/>
</dbReference>
<dbReference type="PROSITE" id="PS50989">
    <property type="entry name" value="COA_CT_CTER"/>
    <property type="match status" value="1"/>
</dbReference>
<dbReference type="PROSITE" id="PS50980">
    <property type="entry name" value="COA_CT_NTER"/>
    <property type="match status" value="1"/>
</dbReference>
<reference key="1">
    <citation type="journal article" date="1998" name="Nature">
        <title>Deciphering the biology of Mycobacterium tuberculosis from the complete genome sequence.</title>
        <authorList>
            <person name="Cole S.T."/>
            <person name="Brosch R."/>
            <person name="Parkhill J."/>
            <person name="Garnier T."/>
            <person name="Churcher C.M."/>
            <person name="Harris D.E."/>
            <person name="Gordon S.V."/>
            <person name="Eiglmeier K."/>
            <person name="Gas S."/>
            <person name="Barry C.E. III"/>
            <person name="Tekaia F."/>
            <person name="Badcock K."/>
            <person name="Basham D."/>
            <person name="Brown D."/>
            <person name="Chillingworth T."/>
            <person name="Connor R."/>
            <person name="Davies R.M."/>
            <person name="Devlin K."/>
            <person name="Feltwell T."/>
            <person name="Gentles S."/>
            <person name="Hamlin N."/>
            <person name="Holroyd S."/>
            <person name="Hornsby T."/>
            <person name="Jagels K."/>
            <person name="Krogh A."/>
            <person name="McLean J."/>
            <person name="Moule S."/>
            <person name="Murphy L.D."/>
            <person name="Oliver S."/>
            <person name="Osborne J."/>
            <person name="Quail M.A."/>
            <person name="Rajandream M.A."/>
            <person name="Rogers J."/>
            <person name="Rutter S."/>
            <person name="Seeger K."/>
            <person name="Skelton S."/>
            <person name="Squares S."/>
            <person name="Squares R."/>
            <person name="Sulston J.E."/>
            <person name="Taylor K."/>
            <person name="Whitehead S."/>
            <person name="Barrell B.G."/>
        </authorList>
    </citation>
    <scope>NUCLEOTIDE SEQUENCE [LARGE SCALE GENOMIC DNA]</scope>
    <source>
        <strain>ATCC 25618 / H37Rv</strain>
    </source>
</reference>
<reference key="2">
    <citation type="journal article" date="2007" name="J. Bacteriol.">
        <title>AccD6, a member of the Fas II locus, is a functional carboxyltransferase subunit of the acyl-coenzyme A carboxylase in Mycobacterium tuberculosis.</title>
        <authorList>
            <person name="Daniel J."/>
            <person name="Oh T.J."/>
            <person name="Lee C.M."/>
            <person name="Kolattukudy P.E."/>
        </authorList>
    </citation>
    <scope>FUNCTION</scope>
    <scope>CATALYTIC ACTIVITY</scope>
    <scope>ACTIVITY REGULATION</scope>
    <scope>BIOPHYSICOCHEMICAL PROPERTIES</scope>
    <scope>PATHWAY</scope>
    <scope>SUBUNIT</scope>
    <scope>INDUCTION</scope>
    <source>
        <strain>H37Rv</strain>
    </source>
</reference>
<reference key="3">
    <citation type="journal article" date="2011" name="Mol. Cell. Proteomics">
        <title>Proteogenomic analysis of Mycobacterium tuberculosis by high resolution mass spectrometry.</title>
        <authorList>
            <person name="Kelkar D.S."/>
            <person name="Kumar D."/>
            <person name="Kumar P."/>
            <person name="Balakrishnan L."/>
            <person name="Muthusamy B."/>
            <person name="Yadav A.K."/>
            <person name="Shrivastava P."/>
            <person name="Marimuthu A."/>
            <person name="Anand S."/>
            <person name="Sundaram H."/>
            <person name="Kingsbury R."/>
            <person name="Harsha H.C."/>
            <person name="Nair B."/>
            <person name="Prasad T.S."/>
            <person name="Chauhan D.S."/>
            <person name="Katoch K."/>
            <person name="Katoch V.M."/>
            <person name="Kumar P."/>
            <person name="Chaerkady R."/>
            <person name="Ramachandran S."/>
            <person name="Dash D."/>
            <person name="Pandey A."/>
        </authorList>
    </citation>
    <scope>ACETYLATION [LARGE SCALE ANALYSIS] AT THR-2</scope>
    <scope>CLEAVAGE OF INITIATOR METHIONINE [LARGE SCALE ANALYSIS]</scope>
    <scope>IDENTIFICATION BY MASS SPECTROMETRY [LARGE SCALE ANALYSIS]</scope>
    <source>
        <strain>ATCC 25618 / H37Rv</strain>
    </source>
</reference>
<reference key="4">
    <citation type="journal article" date="2011" name="J. Bacteriol.">
        <title>AccD6, a key carboxyltransferase essential for mycolic acid synthesis in Mycobacterium tuberculosis, is dispensable in a nonpathogenic strain.</title>
        <authorList>
            <person name="Pawelczyk J."/>
            <person name="Brzostek A."/>
            <person name="Kremer L."/>
            <person name="Dziadek B."/>
            <person name="Rumijowska-Galewicz A."/>
            <person name="Fiolka M."/>
            <person name="Dziadek J."/>
        </authorList>
    </citation>
    <scope>PATHWAY</scope>
    <scope>DISRUPTION PHENOTYPE</scope>
    <source>
        <strain>H37Rv</strain>
    </source>
</reference>
<reference key="5">
    <citation type="journal article" date="2011" name="Acta Crystallogr. F">
        <title>Expression, purification and preliminary crystallographic analysis of Rv2247, the beta subunit of acyl-CoA carboxylase (ACCD6) from Mycobacterium tuberculosis.</title>
        <authorList>
            <person name="Niu C."/>
            <person name="Yin J."/>
            <person name="Cherney M.M."/>
            <person name="James M.N."/>
        </authorList>
    </citation>
    <scope>CRYSTALLIZATION</scope>
</reference>
<reference evidence="11" key="6">
    <citation type="submission" date="2013-06" db="PDB data bank">
        <title>Structural analysis of the carboxyltransferase subunit of Mycobacterium tuberculosis acetyl-CoA carboxylase.</title>
        <authorList>
            <person name="Anandhakrishnan M."/>
            <person name="Ehebauer M.T."/>
            <person name="Wilmanns M."/>
        </authorList>
    </citation>
    <scope>X-RAY CRYSTALLOGRAPHY (1.95 ANGSTROMS)</scope>
</reference>
<reference evidence="9 10" key="7">
    <citation type="journal article" date="2014" name="Antimicrob. Agents Chemother.">
        <title>Structure, activity, and inhibition of the carboxyltransferase beta-subunit of acetyl coenzyme A carboxylase (AccD6) from Mycobacterium tuberculosis.</title>
        <authorList>
            <person name="Reddy M.C."/>
            <person name="Breda A."/>
            <person name="Bruning J.B."/>
            <person name="Sherekar M."/>
            <person name="Valluru S."/>
            <person name="Thurman C."/>
            <person name="Ehrenfeld H."/>
            <person name="Sacchettini J.C."/>
        </authorList>
    </citation>
    <scope>X-RAY CRYSTALLOGRAPHY (2.28 ANGSTROMS) OF APO FORM AND IN COMPLEX WITH INHIBITOR HALOXYFOP-R</scope>
    <scope>CATALYTIC ACTIVITY</scope>
    <scope>ACTIVITY REGULATION</scope>
    <scope>BIOPHYSICOCHEMICAL PROPERTIES</scope>
    <source>
        <strain>H37Rv</strain>
    </source>
</reference>
<reference evidence="12" key="8">
    <citation type="submission" date="2019-06" db="PDB data bank">
        <title>Inhibition of Mycobacterium tuberculosis acetyl-CoA carboxyltransferase(AccD6) domain of acetyl-coenzyme A carboxylase by quizalofop-p.</title>
        <authorList>
            <person name="Reddy M.C.M."/>
            <person name="Sacchettini J.C."/>
        </authorList>
    </citation>
    <scope>X-RAY CRYSTALLOGRAPHY (2.20 ANGSTROMS) IN COMPLEX WITH INHIBITOR QUIZALOFOP-P</scope>
</reference>
<reference evidence="13" key="9">
    <citation type="submission" date="2019-06" db="PDB data bank">
        <title>Elucidating the inhibition and specificity of binding of herbicidal aryloxyphenoxypropionates derivatives to Mycobacterium tuberculosis carboxyltransferasedomain of acetyl-coenzyme A(AccD6).</title>
        <authorList>
            <person name="Reddy M.C.M."/>
            <person name="Nian Z."/>
            <person name="Sacchettini J.C."/>
        </authorList>
    </citation>
    <scope>X-RAY CRYSTALLOGRAPHY (2.40 ANGSTROMS) IN COMPLEX WITH INHIBITOR QUIZALOFOP-P DERIVATIVE</scope>
</reference>
<reference evidence="14" key="10">
    <citation type="submission" date="2019-07" db="PDB data bank">
        <title>Crystal structure of the carboxyltransferase subunit of ACC (ACCD6) in complex with inhibitor quizalofop-p deverivative from Mycobacterium tuberculosis.</title>
        <authorList>
            <person name="Reddy M.C.M."/>
            <person name="Nian Z."/>
            <person name="Sacchettini J.C."/>
        </authorList>
    </citation>
    <scope>X-RAY CRYSTALLOGRAPHY (2.61 ANGSTROMS) IN COMPLEX WITH INHIBITOR QUIZALOFOP-P DERIVATIVE</scope>
</reference>
<reference evidence="15" key="11">
    <citation type="submission" date="2019-08" db="PDB data bank">
        <title>Novel herbicidal derivatives that inhibit carboxyltransferase subunit of the acetyl-CoA carboxylase in Mycobacterium tuberculosis.</title>
        <authorList>
            <person name="Reddy M.C.M."/>
            <person name="Zhou N."/>
            <person name="Sacchettini J."/>
        </authorList>
    </citation>
    <scope>X-RAY CRYSTALLOGRAPHY (2.39 ANGSTROMS) IN COMPLEX WITH INHIBITOR PHENYL-CYCLODIAONE</scope>
</reference>
<protein>
    <recommendedName>
        <fullName evidence="7">Biotin-dependent acetyl-/propionyl-coenzyme A carboxylase beta6 subunit</fullName>
    </recommendedName>
    <alternativeName>
        <fullName evidence="7">Acetyl-CoA carboxylase</fullName>
        <shortName evidence="6">ACC</shortName>
        <ecNumber evidence="3">2.1.3.15</ecNumber>
    </alternativeName>
    <alternativeName>
        <fullName evidence="7">Propionyl-CoA carboxylase</fullName>
        <shortName evidence="6">PCC</shortName>
        <ecNumber evidence="3">2.1.3.-</ecNumber>
    </alternativeName>
</protein>
<proteinExistence type="evidence at protein level"/>